<sequence length="271" mass="30270">MNIMSEAAVEKALDQKMNTVPYKMIGNDVSVYYGEKRALFDVNLNIRENTVTALIGPSGCGKSTFLRTLNRMNDTIENCRVTGKITLDEDDIYDPSIDVVELRARVGMVFQKPNPFPKSIYDNVSYGPRIHGLARTKAELDEVVETSLQKAGLWNEVKDRLQEPGTGLSGGQQQRLCIARAVAVSPEVILMDEPCSALDPIATAKVEELIHELRANFTIVIVTHSMQQAARVSQRTAMFHLGNLVEENDTDKMFTNPDDQRTQDYIMGRFG</sequence>
<feature type="chain" id="PRO_0000092869" description="Phosphate import ATP-binding protein PstB">
    <location>
        <begin position="1"/>
        <end position="271"/>
    </location>
</feature>
<feature type="domain" description="ABC transporter" evidence="1">
    <location>
        <begin position="24"/>
        <end position="266"/>
    </location>
</feature>
<feature type="binding site" evidence="1">
    <location>
        <begin position="56"/>
        <end position="63"/>
    </location>
    <ligand>
        <name>ATP</name>
        <dbReference type="ChEBI" id="CHEBI:30616"/>
    </ligand>
</feature>
<dbReference type="EC" id="7.3.2.1" evidence="1"/>
<dbReference type="EMBL" id="AL591688">
    <property type="protein sequence ID" value="CAC45085.1"/>
    <property type="molecule type" value="Genomic_DNA"/>
</dbReference>
<dbReference type="RefSeq" id="NP_384619.1">
    <property type="nucleotide sequence ID" value="NC_003047.1"/>
</dbReference>
<dbReference type="RefSeq" id="WP_003530182.1">
    <property type="nucleotide sequence ID" value="NC_003047.1"/>
</dbReference>
<dbReference type="SMR" id="Q92SA1"/>
<dbReference type="EnsemblBacteria" id="CAC45085">
    <property type="protein sequence ID" value="CAC45085"/>
    <property type="gene ID" value="SMc02142"/>
</dbReference>
<dbReference type="GeneID" id="89574832"/>
<dbReference type="KEGG" id="sme:SMc02142"/>
<dbReference type="PATRIC" id="fig|266834.11.peg.1886"/>
<dbReference type="eggNOG" id="COG1117">
    <property type="taxonomic scope" value="Bacteria"/>
</dbReference>
<dbReference type="HOGENOM" id="CLU_000604_1_22_5"/>
<dbReference type="OrthoDB" id="9802264at2"/>
<dbReference type="Proteomes" id="UP000001976">
    <property type="component" value="Chromosome"/>
</dbReference>
<dbReference type="GO" id="GO:0005886">
    <property type="term" value="C:plasma membrane"/>
    <property type="evidence" value="ECO:0007669"/>
    <property type="project" value="UniProtKB-SubCell"/>
</dbReference>
<dbReference type="GO" id="GO:0005524">
    <property type="term" value="F:ATP binding"/>
    <property type="evidence" value="ECO:0007669"/>
    <property type="project" value="UniProtKB-KW"/>
</dbReference>
<dbReference type="GO" id="GO:0016887">
    <property type="term" value="F:ATP hydrolysis activity"/>
    <property type="evidence" value="ECO:0007669"/>
    <property type="project" value="InterPro"/>
</dbReference>
<dbReference type="GO" id="GO:0015415">
    <property type="term" value="F:ATPase-coupled phosphate ion transmembrane transporter activity"/>
    <property type="evidence" value="ECO:0007669"/>
    <property type="project" value="UniProtKB-EC"/>
</dbReference>
<dbReference type="GO" id="GO:0035435">
    <property type="term" value="P:phosphate ion transmembrane transport"/>
    <property type="evidence" value="ECO:0007669"/>
    <property type="project" value="InterPro"/>
</dbReference>
<dbReference type="CDD" id="cd03260">
    <property type="entry name" value="ABC_PstB_phosphate_transporter"/>
    <property type="match status" value="1"/>
</dbReference>
<dbReference type="Gene3D" id="3.40.50.300">
    <property type="entry name" value="P-loop containing nucleotide triphosphate hydrolases"/>
    <property type="match status" value="1"/>
</dbReference>
<dbReference type="InterPro" id="IPR003593">
    <property type="entry name" value="AAA+_ATPase"/>
</dbReference>
<dbReference type="InterPro" id="IPR003439">
    <property type="entry name" value="ABC_transporter-like_ATP-bd"/>
</dbReference>
<dbReference type="InterPro" id="IPR017871">
    <property type="entry name" value="ABC_transporter-like_CS"/>
</dbReference>
<dbReference type="InterPro" id="IPR027417">
    <property type="entry name" value="P-loop_NTPase"/>
</dbReference>
<dbReference type="InterPro" id="IPR005670">
    <property type="entry name" value="PstB-like"/>
</dbReference>
<dbReference type="NCBIfam" id="TIGR00972">
    <property type="entry name" value="3a0107s01c2"/>
    <property type="match status" value="1"/>
</dbReference>
<dbReference type="PANTHER" id="PTHR43423">
    <property type="entry name" value="ABC TRANSPORTER I FAMILY MEMBER 17"/>
    <property type="match status" value="1"/>
</dbReference>
<dbReference type="PANTHER" id="PTHR43423:SF1">
    <property type="entry name" value="ABC TRANSPORTER I FAMILY MEMBER 17"/>
    <property type="match status" value="1"/>
</dbReference>
<dbReference type="Pfam" id="PF00005">
    <property type="entry name" value="ABC_tran"/>
    <property type="match status" value="1"/>
</dbReference>
<dbReference type="SMART" id="SM00382">
    <property type="entry name" value="AAA"/>
    <property type="match status" value="1"/>
</dbReference>
<dbReference type="SUPFAM" id="SSF52540">
    <property type="entry name" value="P-loop containing nucleoside triphosphate hydrolases"/>
    <property type="match status" value="1"/>
</dbReference>
<dbReference type="PROSITE" id="PS00211">
    <property type="entry name" value="ABC_TRANSPORTER_1"/>
    <property type="match status" value="1"/>
</dbReference>
<dbReference type="PROSITE" id="PS50893">
    <property type="entry name" value="ABC_TRANSPORTER_2"/>
    <property type="match status" value="1"/>
</dbReference>
<dbReference type="PROSITE" id="PS51238">
    <property type="entry name" value="PSTB"/>
    <property type="match status" value="1"/>
</dbReference>
<accession>Q92SA1</accession>
<keyword id="KW-0067">ATP-binding</keyword>
<keyword id="KW-0997">Cell inner membrane</keyword>
<keyword id="KW-1003">Cell membrane</keyword>
<keyword id="KW-0472">Membrane</keyword>
<keyword id="KW-0547">Nucleotide-binding</keyword>
<keyword id="KW-0592">Phosphate transport</keyword>
<keyword id="KW-1185">Reference proteome</keyword>
<keyword id="KW-1278">Translocase</keyword>
<keyword id="KW-0813">Transport</keyword>
<proteinExistence type="inferred from homology"/>
<organism>
    <name type="scientific">Rhizobium meliloti (strain 1021)</name>
    <name type="common">Ensifer meliloti</name>
    <name type="synonym">Sinorhizobium meliloti</name>
    <dbReference type="NCBI Taxonomy" id="266834"/>
    <lineage>
        <taxon>Bacteria</taxon>
        <taxon>Pseudomonadati</taxon>
        <taxon>Pseudomonadota</taxon>
        <taxon>Alphaproteobacteria</taxon>
        <taxon>Hyphomicrobiales</taxon>
        <taxon>Rhizobiaceae</taxon>
        <taxon>Sinorhizobium/Ensifer group</taxon>
        <taxon>Sinorhizobium</taxon>
    </lineage>
</organism>
<gene>
    <name evidence="1" type="primary">pstB</name>
    <name type="ordered locus">R00513</name>
    <name type="ORF">SMc02142</name>
</gene>
<protein>
    <recommendedName>
        <fullName evidence="1">Phosphate import ATP-binding protein PstB</fullName>
        <ecNumber evidence="1">7.3.2.1</ecNumber>
    </recommendedName>
    <alternativeName>
        <fullName evidence="1">ABC phosphate transporter</fullName>
    </alternativeName>
    <alternativeName>
        <fullName evidence="1">Phosphate-transporting ATPase</fullName>
    </alternativeName>
</protein>
<comment type="function">
    <text evidence="1">Part of the ABC transporter complex PstSACB involved in phosphate import. Responsible for energy coupling to the transport system.</text>
</comment>
<comment type="catalytic activity">
    <reaction evidence="1">
        <text>phosphate(out) + ATP + H2O = ADP + 2 phosphate(in) + H(+)</text>
        <dbReference type="Rhea" id="RHEA:24440"/>
        <dbReference type="ChEBI" id="CHEBI:15377"/>
        <dbReference type="ChEBI" id="CHEBI:15378"/>
        <dbReference type="ChEBI" id="CHEBI:30616"/>
        <dbReference type="ChEBI" id="CHEBI:43474"/>
        <dbReference type="ChEBI" id="CHEBI:456216"/>
        <dbReference type="EC" id="7.3.2.1"/>
    </reaction>
</comment>
<comment type="subunit">
    <text evidence="1">The complex is composed of two ATP-binding proteins (PstB), two transmembrane proteins (PstC and PstA) and a solute-binding protein (PstS).</text>
</comment>
<comment type="subcellular location">
    <subcellularLocation>
        <location evidence="1">Cell inner membrane</location>
        <topology evidence="1">Peripheral membrane protein</topology>
    </subcellularLocation>
</comment>
<comment type="similarity">
    <text evidence="1">Belongs to the ABC transporter superfamily. Phosphate importer (TC 3.A.1.7) family.</text>
</comment>
<evidence type="ECO:0000255" key="1">
    <source>
        <dbReference type="HAMAP-Rule" id="MF_01702"/>
    </source>
</evidence>
<name>PSTB_RHIME</name>
<reference key="1">
    <citation type="journal article" date="2001" name="Proc. Natl. Acad. Sci. U.S.A.">
        <title>Analysis of the chromosome sequence of the legume symbiont Sinorhizobium meliloti strain 1021.</title>
        <authorList>
            <person name="Capela D."/>
            <person name="Barloy-Hubler F."/>
            <person name="Gouzy J."/>
            <person name="Bothe G."/>
            <person name="Ampe F."/>
            <person name="Batut J."/>
            <person name="Boistard P."/>
            <person name="Becker A."/>
            <person name="Boutry M."/>
            <person name="Cadieu E."/>
            <person name="Dreano S."/>
            <person name="Gloux S."/>
            <person name="Godrie T."/>
            <person name="Goffeau A."/>
            <person name="Kahn D."/>
            <person name="Kiss E."/>
            <person name="Lelaure V."/>
            <person name="Masuy D."/>
            <person name="Pohl T."/>
            <person name="Portetelle D."/>
            <person name="Puehler A."/>
            <person name="Purnelle B."/>
            <person name="Ramsperger U."/>
            <person name="Renard C."/>
            <person name="Thebault P."/>
            <person name="Vandenbol M."/>
            <person name="Weidner S."/>
            <person name="Galibert F."/>
        </authorList>
    </citation>
    <scope>NUCLEOTIDE SEQUENCE [LARGE SCALE GENOMIC DNA]</scope>
    <source>
        <strain>1021</strain>
    </source>
</reference>
<reference key="2">
    <citation type="journal article" date="2001" name="Science">
        <title>The composite genome of the legume symbiont Sinorhizobium meliloti.</title>
        <authorList>
            <person name="Galibert F."/>
            <person name="Finan T.M."/>
            <person name="Long S.R."/>
            <person name="Puehler A."/>
            <person name="Abola P."/>
            <person name="Ampe F."/>
            <person name="Barloy-Hubler F."/>
            <person name="Barnett M.J."/>
            <person name="Becker A."/>
            <person name="Boistard P."/>
            <person name="Bothe G."/>
            <person name="Boutry M."/>
            <person name="Bowser L."/>
            <person name="Buhrmester J."/>
            <person name="Cadieu E."/>
            <person name="Capela D."/>
            <person name="Chain P."/>
            <person name="Cowie A."/>
            <person name="Davis R.W."/>
            <person name="Dreano S."/>
            <person name="Federspiel N.A."/>
            <person name="Fisher R.F."/>
            <person name="Gloux S."/>
            <person name="Godrie T."/>
            <person name="Goffeau A."/>
            <person name="Golding B."/>
            <person name="Gouzy J."/>
            <person name="Gurjal M."/>
            <person name="Hernandez-Lucas I."/>
            <person name="Hong A."/>
            <person name="Huizar L."/>
            <person name="Hyman R.W."/>
            <person name="Jones T."/>
            <person name="Kahn D."/>
            <person name="Kahn M.L."/>
            <person name="Kalman S."/>
            <person name="Keating D.H."/>
            <person name="Kiss E."/>
            <person name="Komp C."/>
            <person name="Lelaure V."/>
            <person name="Masuy D."/>
            <person name="Palm C."/>
            <person name="Peck M.C."/>
            <person name="Pohl T.M."/>
            <person name="Portetelle D."/>
            <person name="Purnelle B."/>
            <person name="Ramsperger U."/>
            <person name="Surzycki R."/>
            <person name="Thebault P."/>
            <person name="Vandenbol M."/>
            <person name="Vorhoelter F.J."/>
            <person name="Weidner S."/>
            <person name="Wells D.H."/>
            <person name="Wong K."/>
            <person name="Yeh K.-C."/>
            <person name="Batut J."/>
        </authorList>
    </citation>
    <scope>NUCLEOTIDE SEQUENCE [LARGE SCALE GENOMIC DNA]</scope>
    <source>
        <strain>1021</strain>
    </source>
</reference>